<evidence type="ECO:0000250" key="1"/>
<evidence type="ECO:0000269" key="2">
    <source>
    </source>
</evidence>
<evidence type="ECO:0000305" key="3"/>
<reference key="1">
    <citation type="journal article" date="2011" name="Plant Cell Physiol.">
        <title>The Cyt P450 enzyme CYP716A47 catalyzes the formation of protopanaxadiol from dammarenediol-II during ginsenoside biosynthesis in Panax ginseng.</title>
        <authorList>
            <person name="Han J.Y."/>
            <person name="Kim H.J."/>
            <person name="Kwon Y.S."/>
            <person name="Choi Y.E."/>
        </authorList>
    </citation>
    <scope>NUCLEOTIDE SEQUENCE [MRNA]</scope>
    <scope>INDUCTION</scope>
</reference>
<organism>
    <name type="scientific">Panax ginseng</name>
    <name type="common">Korean ginseng</name>
    <dbReference type="NCBI Taxonomy" id="4054"/>
    <lineage>
        <taxon>Eukaryota</taxon>
        <taxon>Viridiplantae</taxon>
        <taxon>Streptophyta</taxon>
        <taxon>Embryophyta</taxon>
        <taxon>Tracheophyta</taxon>
        <taxon>Spermatophyta</taxon>
        <taxon>Magnoliopsida</taxon>
        <taxon>eudicotyledons</taxon>
        <taxon>Gunneridae</taxon>
        <taxon>Pentapetalae</taxon>
        <taxon>asterids</taxon>
        <taxon>campanulids</taxon>
        <taxon>Apiales</taxon>
        <taxon>Araliaceae</taxon>
        <taxon>Panax</taxon>
    </lineage>
</organism>
<proteinExistence type="evidence at transcript level"/>
<sequence length="245" mass="28117">MADKYGPIFSLQLGIHKTIVVSSWAVAKECFTTHDKVFLTRPKSLAGKHMGYDHSVFLFLAYGPYWRDTRKLLIVELLSNRRLDVLKHVRESEVNSFVREMYEQWISNGGGGSKAVVEMKERFGYLTMNVILRMVAGKRYSGTEVYSDEARRFQKALGDLLHLVVLSMVSDAVPLFGWIDALRGYTGEMKNTAKEIDHVLGRWLKEHRQKRETLSINESEHDFIHGMQSVMDGSQFTEHDTDKAI</sequence>
<comment type="function">
    <text evidence="1">Probable heme-thiolate monooxygenase.</text>
</comment>
<comment type="cofactor">
    <cofactor evidence="1">
        <name>heme</name>
        <dbReference type="ChEBI" id="CHEBI:30413"/>
    </cofactor>
</comment>
<comment type="induction">
    <text evidence="2">Down-regulated by methyl jasmonate (MeJA).</text>
</comment>
<comment type="similarity">
    <text evidence="3">Belongs to the cytochrome P450 family.</text>
</comment>
<feature type="chain" id="PRO_0000425875" description="Cytochrome P450 CYP82H23">
    <location>
        <begin position="1"/>
        <end position="245" status="greater than"/>
    </location>
</feature>
<feature type="non-terminal residue">
    <location>
        <position position="245"/>
    </location>
</feature>
<keyword id="KW-0349">Heme</keyword>
<keyword id="KW-0408">Iron</keyword>
<keyword id="KW-0479">Metal-binding</keyword>
<keyword id="KW-0503">Monooxygenase</keyword>
<keyword id="KW-0560">Oxidoreductase</keyword>
<name>C7H23_PANGI</name>
<protein>
    <recommendedName>
        <fullName>Cytochrome P450 CYP82H23</fullName>
        <ecNumber>1.14.-.-</ecNumber>
    </recommendedName>
</protein>
<accession>H2DH23</accession>
<dbReference type="EC" id="1.14.-.-"/>
<dbReference type="EMBL" id="JN604544">
    <property type="protein sequence ID" value="AEY75220.1"/>
    <property type="molecule type" value="mRNA"/>
</dbReference>
<dbReference type="SMR" id="H2DH23"/>
<dbReference type="GO" id="GO:0020037">
    <property type="term" value="F:heme binding"/>
    <property type="evidence" value="ECO:0007669"/>
    <property type="project" value="InterPro"/>
</dbReference>
<dbReference type="GO" id="GO:0005506">
    <property type="term" value="F:iron ion binding"/>
    <property type="evidence" value="ECO:0007669"/>
    <property type="project" value="InterPro"/>
</dbReference>
<dbReference type="GO" id="GO:0004497">
    <property type="term" value="F:monooxygenase activity"/>
    <property type="evidence" value="ECO:0007669"/>
    <property type="project" value="UniProtKB-KW"/>
</dbReference>
<dbReference type="GO" id="GO:0016705">
    <property type="term" value="F:oxidoreductase activity, acting on paired donors, with incorporation or reduction of molecular oxygen"/>
    <property type="evidence" value="ECO:0007669"/>
    <property type="project" value="InterPro"/>
</dbReference>
<dbReference type="GO" id="GO:0046246">
    <property type="term" value="P:terpene biosynthetic process"/>
    <property type="evidence" value="ECO:0007669"/>
    <property type="project" value="TreeGrafter"/>
</dbReference>
<dbReference type="Gene3D" id="1.10.630.10">
    <property type="entry name" value="Cytochrome P450"/>
    <property type="match status" value="1"/>
</dbReference>
<dbReference type="InterPro" id="IPR001128">
    <property type="entry name" value="Cyt_P450"/>
</dbReference>
<dbReference type="InterPro" id="IPR002401">
    <property type="entry name" value="Cyt_P450_E_grp-I"/>
</dbReference>
<dbReference type="InterPro" id="IPR036396">
    <property type="entry name" value="Cyt_P450_sf"/>
</dbReference>
<dbReference type="InterPro" id="IPR050651">
    <property type="entry name" value="Plant_Cytochrome_P450_Monoox"/>
</dbReference>
<dbReference type="PANTHER" id="PTHR47947">
    <property type="entry name" value="CYTOCHROME P450 82C3-RELATED"/>
    <property type="match status" value="1"/>
</dbReference>
<dbReference type="PANTHER" id="PTHR47947:SF8">
    <property type="entry name" value="CYTOCHROME P450 82C4-LIKE"/>
    <property type="match status" value="1"/>
</dbReference>
<dbReference type="Pfam" id="PF00067">
    <property type="entry name" value="p450"/>
    <property type="match status" value="1"/>
</dbReference>
<dbReference type="PRINTS" id="PR00463">
    <property type="entry name" value="EP450I"/>
</dbReference>
<dbReference type="SUPFAM" id="SSF48264">
    <property type="entry name" value="Cytochrome P450"/>
    <property type="match status" value="1"/>
</dbReference>